<feature type="initiator methionine" description="Removed" evidence="18">
    <location>
        <position position="1"/>
    </location>
</feature>
<feature type="chain" id="PRO_0000213967" description="Lys-63-specific deubiquitinase BRCC36">
    <location>
        <begin position="2"/>
        <end position="316"/>
    </location>
</feature>
<feature type="domain" description="MPN" evidence="3">
    <location>
        <begin position="12"/>
        <end position="179"/>
    </location>
</feature>
<feature type="short sequence motif" description="JAMM motif" evidence="3">
    <location>
        <begin position="122"/>
        <end position="135"/>
    </location>
</feature>
<feature type="binding site" evidence="3">
    <location>
        <position position="122"/>
    </location>
    <ligand>
        <name>Zn(2+)</name>
        <dbReference type="ChEBI" id="CHEBI:29105"/>
        <note>catalytic</note>
    </ligand>
</feature>
<feature type="binding site" evidence="3">
    <location>
        <position position="124"/>
    </location>
    <ligand>
        <name>Zn(2+)</name>
        <dbReference type="ChEBI" id="CHEBI:29105"/>
        <note>catalytic</note>
    </ligand>
</feature>
<feature type="binding site" evidence="3">
    <location>
        <position position="135"/>
    </location>
    <ligand>
        <name>Zn(2+)</name>
        <dbReference type="ChEBI" id="CHEBI:29105"/>
        <note>catalytic</note>
    </ligand>
</feature>
<feature type="modified residue" description="N-acetylalanine" evidence="18">
    <location>
        <position position="2"/>
    </location>
</feature>
<feature type="modified residue" description="Phosphoserine" evidence="23">
    <location>
        <position position="258"/>
    </location>
</feature>
<feature type="splice variant" id="VSP_037257" description="In isoform 4." evidence="20">
    <location>
        <begin position="1"/>
        <end position="114"/>
    </location>
</feature>
<feature type="splice variant" id="VSP_037258" description="In isoform 3." evidence="20">
    <original>T</original>
    <variation>TS</variation>
    <location>
        <position position="46"/>
    </location>
</feature>
<feature type="splice variant" id="VSP_037259" description="In isoform 5." evidence="21">
    <original>ESLHGPRDFWSSSQHISIEGQKEEERYERIEIPIHIVPHVTIGKVCLESAVELPKILCQEEQDAYRRIHS</original>
    <variation>D</variation>
    <location>
        <begin position="183"/>
        <end position="252"/>
    </location>
</feature>
<feature type="splice variant" id="VSP_003261" description="In isoform 1 and isoform 3." evidence="19 20">
    <location>
        <begin position="184"/>
        <end position="208"/>
    </location>
</feature>
<feature type="sequence variant" id="VAR_050097" description="In dbSNP:rs28997578.">
    <original>I</original>
    <variation>V</variation>
    <location>
        <position position="74"/>
    </location>
</feature>
<feature type="mutagenesis site" description="Abolishes localization to sites of DNA damage and interaction with ABRAXAS2; UIMC1; SHMT2; BARAM2 and BABAM1; when associated with R-27." evidence="16">
    <original>L</original>
    <variation>R</variation>
    <location>
        <position position="23"/>
    </location>
</feature>
<feature type="mutagenesis site" description="Abolishes localization to sites of DNA damage and interaction with ABRAXAS2; UIMC1; SHMT2; BABAM2 and BABAM1; when associated with R-23." evidence="16">
    <original>L</original>
    <variation>R</variation>
    <location>
        <position position="27"/>
    </location>
</feature>
<feature type="mutagenesis site" description="Abolishes metalloprotease activity and function in DNA repair." evidence="6 8 10 15">
    <original>HSH</original>
    <variation>QSQ</variation>
    <location>
        <begin position="122"/>
        <end position="124"/>
    </location>
</feature>
<feature type="mutagenesis site" description="Loss of deubiquitinase activity." evidence="9">
    <original>H</original>
    <variation>Q</variation>
    <location>
        <position position="122"/>
    </location>
</feature>
<feature type="mutagenesis site" description="Abolishes interaction with UIMC1 and SHMT2." evidence="16">
    <original>A</original>
    <variation>R</variation>
    <location>
        <position position="278"/>
    </location>
</feature>
<feature type="sequence conflict" description="In Ref. 2; AAB29005." evidence="21" ref="2">
    <original>G</original>
    <variation>W</variation>
    <location>
        <position position="225"/>
    </location>
</feature>
<keyword id="KW-0002">3D-structure</keyword>
<keyword id="KW-0007">Acetylation</keyword>
<keyword id="KW-0025">Alternative splicing</keyword>
<keyword id="KW-0131">Cell cycle</keyword>
<keyword id="KW-0132">Cell division</keyword>
<keyword id="KW-0156">Chromatin regulator</keyword>
<keyword id="KW-0160">Chromosomal rearrangement</keyword>
<keyword id="KW-0963">Cytoplasm</keyword>
<keyword id="KW-0206">Cytoskeleton</keyword>
<keyword id="KW-0903">Direct protein sequencing</keyword>
<keyword id="KW-0227">DNA damage</keyword>
<keyword id="KW-0234">DNA repair</keyword>
<keyword id="KW-0378">Hydrolase</keyword>
<keyword id="KW-0479">Metal-binding</keyword>
<keyword id="KW-0482">Metalloprotease</keyword>
<keyword id="KW-0498">Mitosis</keyword>
<keyword id="KW-0539">Nucleus</keyword>
<keyword id="KW-0597">Phosphoprotein</keyword>
<keyword id="KW-0645">Protease</keyword>
<keyword id="KW-1267">Proteomics identification</keyword>
<keyword id="KW-0656">Proto-oncogene</keyword>
<keyword id="KW-1185">Reference proteome</keyword>
<keyword id="KW-0833">Ubl conjugation pathway</keyword>
<keyword id="KW-0862">Zinc</keyword>
<proteinExistence type="evidence at protein level"/>
<accession>P46736</accession>
<accession>A6QRF8</accession>
<accession>A6QRF9</accession>
<accession>A8MUX5</accession>
<accession>A8MWH0</accession>
<accession>A9Z1Y0</accession>
<accession>A9Z1Y5</accession>
<accession>B1B062</accession>
<accession>B4DQN7</accession>
<accession>Q16107</accession>
<accession>Q53YX5</accession>
<accession>Q9BTZ6</accession>
<sequence>MAVQVVQAVQAVHLESDAFLVCLNHALSTEKEEVMGLCIGELNDDTRSDSKFAYTGTEMRTVAEKVDAVRIVHIHSVIILRRSDKRKDRVEISPEQLSAASTEAERLAELTGRPMRVVGWYHSHPHITVWPSHVDVRTQAMYQMMDQGFVGLIFSCFIEDKNTKTGRVLYTCFQSIQAQKSSESLHGPRDFWSSSQHISIEGQKEEERYERIEIPIHIVPHVTIGKVCLESAVELPKILCQEEQDAYRRIHSLTHLDSVTKIHNGSVFTKNLCSQMSAVSGPLLQWLEDRLEQNQQHLQELQQEKEELMQELSSLE</sequence>
<name>BRCC3_HUMAN</name>
<dbReference type="EC" id="3.4.19.-" evidence="6 9 13 16"/>
<dbReference type="EMBL" id="X64643">
    <property type="protein sequence ID" value="CAA45917.1"/>
    <property type="molecule type" value="mRNA"/>
</dbReference>
<dbReference type="EMBL" id="S68015">
    <property type="protein sequence ID" value="AAB29005.2"/>
    <property type="status" value="ALT_INIT"/>
    <property type="molecule type" value="mRNA"/>
</dbReference>
<dbReference type="EMBL" id="AY438030">
    <property type="protein sequence ID" value="AAR30498.1"/>
    <property type="molecule type" value="mRNA"/>
</dbReference>
<dbReference type="EMBL" id="AK298886">
    <property type="protein sequence ID" value="BAG60999.1"/>
    <property type="molecule type" value="mRNA"/>
</dbReference>
<dbReference type="EMBL" id="AK299194">
    <property type="protein sequence ID" value="BAG61237.1"/>
    <property type="molecule type" value="mRNA"/>
</dbReference>
<dbReference type="EMBL" id="AK313544">
    <property type="protein sequence ID" value="BAG36320.1"/>
    <property type="molecule type" value="mRNA"/>
</dbReference>
<dbReference type="EMBL" id="BX293995">
    <property type="status" value="NOT_ANNOTATED_CDS"/>
    <property type="molecule type" value="Genomic_DNA"/>
</dbReference>
<dbReference type="EMBL" id="BX470111">
    <property type="status" value="NOT_ANNOTATED_CDS"/>
    <property type="molecule type" value="Genomic_DNA"/>
</dbReference>
<dbReference type="EMBL" id="BC002999">
    <property type="protein sequence ID" value="AAH02999.1"/>
    <property type="molecule type" value="mRNA"/>
</dbReference>
<dbReference type="EMBL" id="BC006540">
    <property type="protein sequence ID" value="AAH06540.1"/>
    <property type="molecule type" value="mRNA"/>
</dbReference>
<dbReference type="CCDS" id="CCDS56610.1">
    <molecule id="P46736-3"/>
</dbReference>
<dbReference type="CCDS" id="CCDS56611.1">
    <molecule id="P46736-1"/>
</dbReference>
<dbReference type="CCDS" id="CCDS56612.1">
    <molecule id="P46736-2"/>
</dbReference>
<dbReference type="PIR" id="I38167">
    <property type="entry name" value="I38167"/>
</dbReference>
<dbReference type="RefSeq" id="NP_001018065.1">
    <molecule id="P46736-2"/>
    <property type="nucleotide sequence ID" value="NM_001018055.3"/>
</dbReference>
<dbReference type="RefSeq" id="NP_001229569.1">
    <molecule id="P46736-3"/>
    <property type="nucleotide sequence ID" value="NM_001242640.2"/>
</dbReference>
<dbReference type="RefSeq" id="NP_077308.1">
    <molecule id="P46736-1"/>
    <property type="nucleotide sequence ID" value="NM_024332.4"/>
</dbReference>
<dbReference type="RefSeq" id="XP_016885327.1">
    <property type="nucleotide sequence ID" value="XM_017029838.1"/>
</dbReference>
<dbReference type="PDB" id="6H3C">
    <property type="method" value="EM"/>
    <property type="resolution" value="3.90 A"/>
    <property type="chains" value="B/G=1-316"/>
</dbReference>
<dbReference type="PDB" id="6R8F">
    <property type="method" value="EM"/>
    <property type="resolution" value="3.80 A"/>
    <property type="chains" value="A/C=1-316"/>
</dbReference>
<dbReference type="PDB" id="8PVY">
    <property type="method" value="EM"/>
    <property type="resolution" value="3.02 A"/>
    <property type="chains" value="A/C/G/I=1-312"/>
</dbReference>
<dbReference type="PDB" id="8PY2">
    <property type="method" value="EM"/>
    <property type="resolution" value="3.32 A"/>
    <property type="chains" value="A/C/G/I=1-316"/>
</dbReference>
<dbReference type="PDBsum" id="6H3C"/>
<dbReference type="PDBsum" id="6R8F"/>
<dbReference type="PDBsum" id="8PVY"/>
<dbReference type="PDBsum" id="8PY2"/>
<dbReference type="EMDB" id="EMD-0132"/>
<dbReference type="EMDB" id="EMD-17980"/>
<dbReference type="EMDB" id="EMD-18009"/>
<dbReference type="EMDB" id="EMD-4759"/>
<dbReference type="EMDB" id="EMD-4760"/>
<dbReference type="SMR" id="P46736"/>
<dbReference type="BioGRID" id="122599">
    <property type="interactions" value="139"/>
</dbReference>
<dbReference type="ComplexPortal" id="CPX-4425">
    <property type="entry name" value="BRCA1-A complex"/>
</dbReference>
<dbReference type="ComplexPortal" id="CPX-9341">
    <property type="entry name" value="BRISC-SHMT2 complex"/>
</dbReference>
<dbReference type="ComplexPortal" id="CPX-9421">
    <property type="entry name" value="BRISC complex"/>
</dbReference>
<dbReference type="ComplexPortal" id="CPX-955">
    <property type="entry name" value="BRCC E3 ubiquitin ligase complex"/>
</dbReference>
<dbReference type="CORUM" id="P46736"/>
<dbReference type="DIP" id="DIP-48719N"/>
<dbReference type="FunCoup" id="P46736">
    <property type="interactions" value="2880"/>
</dbReference>
<dbReference type="IntAct" id="P46736">
    <property type="interactions" value="51"/>
</dbReference>
<dbReference type="MINT" id="P46736"/>
<dbReference type="STRING" id="9606.ENSP00000358474"/>
<dbReference type="BindingDB" id="P46736"/>
<dbReference type="ChEMBL" id="CHEMBL4105965"/>
<dbReference type="DrugBank" id="DB01593">
    <property type="generic name" value="Zinc"/>
</dbReference>
<dbReference type="DrugBank" id="DB14487">
    <property type="generic name" value="Zinc acetate"/>
</dbReference>
<dbReference type="DrugBank" id="DB14533">
    <property type="generic name" value="Zinc chloride"/>
</dbReference>
<dbReference type="DrugBank" id="DB14548">
    <property type="generic name" value="Zinc sulfate, unspecified form"/>
</dbReference>
<dbReference type="MEROPS" id="M67.004"/>
<dbReference type="GlyGen" id="P46736">
    <property type="glycosylation" value="1 site, 1 O-linked glycan (1 site)"/>
</dbReference>
<dbReference type="iPTMnet" id="P46736"/>
<dbReference type="PhosphoSitePlus" id="P46736"/>
<dbReference type="BioMuta" id="BRCC3"/>
<dbReference type="DMDM" id="20532383"/>
<dbReference type="jPOST" id="P46736"/>
<dbReference type="MassIVE" id="P46736"/>
<dbReference type="PaxDb" id="9606-ENSP00000358474"/>
<dbReference type="PeptideAtlas" id="P46736"/>
<dbReference type="ProteomicsDB" id="55753">
    <molecule id="P46736-1"/>
</dbReference>
<dbReference type="ProteomicsDB" id="55754">
    <molecule id="P46736-2"/>
</dbReference>
<dbReference type="ProteomicsDB" id="55755">
    <molecule id="P46736-3"/>
</dbReference>
<dbReference type="ProteomicsDB" id="55756">
    <molecule id="P46736-4"/>
</dbReference>
<dbReference type="ProteomicsDB" id="55757">
    <molecule id="P46736-5"/>
</dbReference>
<dbReference type="Pumba" id="P46736"/>
<dbReference type="Antibodypedia" id="31407">
    <property type="antibodies" value="357 antibodies from 36 providers"/>
</dbReference>
<dbReference type="DNASU" id="79184"/>
<dbReference type="Ensembl" id="ENST00000330045.12">
    <molecule id="P46736-2"/>
    <property type="protein sequence ID" value="ENSP00000328641.7"/>
    <property type="gene ID" value="ENSG00000185515.16"/>
</dbReference>
<dbReference type="Ensembl" id="ENST00000340647.8">
    <molecule id="P46736-3"/>
    <property type="protein sequence ID" value="ENSP00000344103.4"/>
    <property type="gene ID" value="ENSG00000185515.16"/>
</dbReference>
<dbReference type="Ensembl" id="ENST00000369459.6">
    <molecule id="P46736-5"/>
    <property type="protein sequence ID" value="ENSP00000358471.2"/>
    <property type="gene ID" value="ENSG00000185515.16"/>
</dbReference>
<dbReference type="Ensembl" id="ENST00000369462.5">
    <molecule id="P46736-1"/>
    <property type="protein sequence ID" value="ENSP00000358474.1"/>
    <property type="gene ID" value="ENSG00000185515.16"/>
</dbReference>
<dbReference type="GeneID" id="79184"/>
<dbReference type="KEGG" id="hsa:79184"/>
<dbReference type="MANE-Select" id="ENST00000330045.12">
    <molecule id="P46736-2"/>
    <property type="protein sequence ID" value="ENSP00000328641.7"/>
    <property type="RefSeq nucleotide sequence ID" value="NM_001018055.3"/>
    <property type="RefSeq protein sequence ID" value="NP_001018065.1"/>
</dbReference>
<dbReference type="UCSC" id="uc004fna.4">
    <molecule id="P46736-1"/>
    <property type="organism name" value="human"/>
</dbReference>
<dbReference type="AGR" id="HGNC:24185"/>
<dbReference type="CTD" id="79184"/>
<dbReference type="DisGeNET" id="79184"/>
<dbReference type="GeneCards" id="BRCC3"/>
<dbReference type="HGNC" id="HGNC:24185">
    <property type="gene designation" value="BRCC3"/>
</dbReference>
<dbReference type="HPA" id="ENSG00000185515">
    <property type="expression patterns" value="Low tissue specificity"/>
</dbReference>
<dbReference type="MalaCards" id="BRCC3"/>
<dbReference type="MIM" id="300617">
    <property type="type" value="gene"/>
</dbReference>
<dbReference type="neXtProt" id="NX_P46736"/>
<dbReference type="OpenTargets" id="ENSG00000185515"/>
<dbReference type="Orphanet" id="280679">
    <property type="disease" value="Moyamoya angiopathy-short stature-facial dysmorphism-hypergonadotropic hypogonadism syndrome"/>
</dbReference>
<dbReference type="PharmGKB" id="PA134922847"/>
<dbReference type="VEuPathDB" id="HostDB:ENSG00000185515"/>
<dbReference type="eggNOG" id="KOG1555">
    <property type="taxonomic scope" value="Eukaryota"/>
</dbReference>
<dbReference type="GeneTree" id="ENSGT00390000000360"/>
<dbReference type="HOGENOM" id="CLU_053351_0_0_1"/>
<dbReference type="InParanoid" id="P46736"/>
<dbReference type="OMA" id="CIGEIDT"/>
<dbReference type="OrthoDB" id="446074at2759"/>
<dbReference type="PAN-GO" id="P46736">
    <property type="GO annotations" value="6 GO annotations based on evolutionary models"/>
</dbReference>
<dbReference type="PhylomeDB" id="P46736"/>
<dbReference type="TreeFam" id="TF328524"/>
<dbReference type="PathwayCommons" id="P46736"/>
<dbReference type="Reactome" id="R-HSA-5689901">
    <property type="pathway name" value="Metalloprotease DUBs"/>
</dbReference>
<dbReference type="Reactome" id="R-HSA-5693565">
    <property type="pathway name" value="Recruitment and ATM-mediated phosphorylation of repair and signaling proteins at DNA double strand breaks"/>
</dbReference>
<dbReference type="Reactome" id="R-HSA-5693571">
    <property type="pathway name" value="Nonhomologous End-Joining (NHEJ)"/>
</dbReference>
<dbReference type="Reactome" id="R-HSA-5693607">
    <property type="pathway name" value="Processing of DNA double-strand break ends"/>
</dbReference>
<dbReference type="Reactome" id="R-HSA-69473">
    <property type="pathway name" value="G2/M DNA damage checkpoint"/>
</dbReference>
<dbReference type="SignaLink" id="P46736"/>
<dbReference type="SIGNOR" id="P46736"/>
<dbReference type="BioGRID-ORCS" id="79184">
    <property type="hits" value="33 hits in 819 CRISPR screens"/>
</dbReference>
<dbReference type="ChiTaRS" id="BRCC3">
    <property type="organism name" value="human"/>
</dbReference>
<dbReference type="GeneWiki" id="BRCC3"/>
<dbReference type="GenomeRNAi" id="79184"/>
<dbReference type="Pharos" id="P46736">
    <property type="development level" value="Tbio"/>
</dbReference>
<dbReference type="PRO" id="PR:P46736"/>
<dbReference type="Proteomes" id="UP000005640">
    <property type="component" value="Chromosome X"/>
</dbReference>
<dbReference type="RNAct" id="P46736">
    <property type="molecule type" value="protein"/>
</dbReference>
<dbReference type="Bgee" id="ENSG00000185515">
    <property type="expression patterns" value="Expressed in parotid gland and 209 other cell types or tissues"/>
</dbReference>
<dbReference type="ExpressionAtlas" id="P46736">
    <property type="expression patterns" value="baseline and differential"/>
</dbReference>
<dbReference type="GO" id="GO:0070531">
    <property type="term" value="C:BRCA1-A complex"/>
    <property type="evidence" value="ECO:0000314"/>
    <property type="project" value="UniProtKB"/>
</dbReference>
<dbReference type="GO" id="GO:0070552">
    <property type="term" value="C:BRISC complex"/>
    <property type="evidence" value="ECO:0000314"/>
    <property type="project" value="UniProtKB"/>
</dbReference>
<dbReference type="GO" id="GO:0005737">
    <property type="term" value="C:cytoplasm"/>
    <property type="evidence" value="ECO:0000314"/>
    <property type="project" value="UniProtKB"/>
</dbReference>
<dbReference type="GO" id="GO:0005829">
    <property type="term" value="C:cytosol"/>
    <property type="evidence" value="ECO:0000304"/>
    <property type="project" value="Reactome"/>
</dbReference>
<dbReference type="GO" id="GO:0000152">
    <property type="term" value="C:nuclear ubiquitin ligase complex"/>
    <property type="evidence" value="ECO:0000314"/>
    <property type="project" value="UniProtKB"/>
</dbReference>
<dbReference type="GO" id="GO:0005654">
    <property type="term" value="C:nucleoplasm"/>
    <property type="evidence" value="ECO:0000314"/>
    <property type="project" value="HPA"/>
</dbReference>
<dbReference type="GO" id="GO:0005634">
    <property type="term" value="C:nucleus"/>
    <property type="evidence" value="ECO:0000314"/>
    <property type="project" value="UniProtKB"/>
</dbReference>
<dbReference type="GO" id="GO:0000922">
    <property type="term" value="C:spindle pole"/>
    <property type="evidence" value="ECO:0007669"/>
    <property type="project" value="UniProtKB-SubCell"/>
</dbReference>
<dbReference type="GO" id="GO:0000151">
    <property type="term" value="C:ubiquitin ligase complex"/>
    <property type="evidence" value="ECO:0000314"/>
    <property type="project" value="MGI"/>
</dbReference>
<dbReference type="GO" id="GO:0004843">
    <property type="term" value="F:cysteine-type deubiquitinase activity"/>
    <property type="evidence" value="ECO:0007669"/>
    <property type="project" value="InterPro"/>
</dbReference>
<dbReference type="GO" id="GO:0030234">
    <property type="term" value="F:enzyme regulator activity"/>
    <property type="evidence" value="ECO:0000314"/>
    <property type="project" value="MGI"/>
</dbReference>
<dbReference type="GO" id="GO:0061578">
    <property type="term" value="F:K63-linked deubiquitinase activity"/>
    <property type="evidence" value="ECO:0000314"/>
    <property type="project" value="UniProtKB"/>
</dbReference>
<dbReference type="GO" id="GO:0046872">
    <property type="term" value="F:metal ion binding"/>
    <property type="evidence" value="ECO:0007669"/>
    <property type="project" value="UniProtKB-KW"/>
</dbReference>
<dbReference type="GO" id="GO:0140492">
    <property type="term" value="F:metal-dependent deubiquitinase activity"/>
    <property type="evidence" value="ECO:0000315"/>
    <property type="project" value="UniProtKB"/>
</dbReference>
<dbReference type="GO" id="GO:0008237">
    <property type="term" value="F:metallopeptidase activity"/>
    <property type="evidence" value="ECO:0000315"/>
    <property type="project" value="UniProtKB"/>
</dbReference>
<dbReference type="GO" id="GO:0031593">
    <property type="term" value="F:polyubiquitin modification-dependent protein binding"/>
    <property type="evidence" value="ECO:0000314"/>
    <property type="project" value="UniProtKB"/>
</dbReference>
<dbReference type="GO" id="GO:0051301">
    <property type="term" value="P:cell division"/>
    <property type="evidence" value="ECO:0007669"/>
    <property type="project" value="UniProtKB-KW"/>
</dbReference>
<dbReference type="GO" id="GO:0071479">
    <property type="term" value="P:cellular response to ionizing radiation"/>
    <property type="evidence" value="ECO:0000315"/>
    <property type="project" value="ComplexPortal"/>
</dbReference>
<dbReference type="GO" id="GO:0140861">
    <property type="term" value="P:DNA repair-dependent chromatin remodeling"/>
    <property type="evidence" value="ECO:0000315"/>
    <property type="project" value="UniProtKB"/>
</dbReference>
<dbReference type="GO" id="GO:0006302">
    <property type="term" value="P:double-strand break repair"/>
    <property type="evidence" value="ECO:0000315"/>
    <property type="project" value="UniProtKB"/>
</dbReference>
<dbReference type="GO" id="GO:0007095">
    <property type="term" value="P:mitotic G2 DNA damage checkpoint signaling"/>
    <property type="evidence" value="ECO:0000315"/>
    <property type="project" value="UniProtKB"/>
</dbReference>
<dbReference type="GO" id="GO:0044818">
    <property type="term" value="P:mitotic G2/M transition checkpoint"/>
    <property type="evidence" value="ECO:0000303"/>
    <property type="project" value="ComplexPortal"/>
</dbReference>
<dbReference type="GO" id="GO:0045739">
    <property type="term" value="P:positive regulation of DNA repair"/>
    <property type="evidence" value="ECO:0000315"/>
    <property type="project" value="UniProtKB"/>
</dbReference>
<dbReference type="GO" id="GO:1900227">
    <property type="term" value="P:positive regulation of NLRP3 inflammasome complex assembly"/>
    <property type="evidence" value="ECO:0000314"/>
    <property type="project" value="UniProt"/>
</dbReference>
<dbReference type="GO" id="GO:0016579">
    <property type="term" value="P:protein deubiquitination"/>
    <property type="evidence" value="ECO:0000304"/>
    <property type="project" value="Reactome"/>
</dbReference>
<dbReference type="GO" id="GO:0070536">
    <property type="term" value="P:protein K63-linked deubiquitination"/>
    <property type="evidence" value="ECO:0000314"/>
    <property type="project" value="UniProtKB"/>
</dbReference>
<dbReference type="GO" id="GO:0006508">
    <property type="term" value="P:proteolysis"/>
    <property type="evidence" value="ECO:0007669"/>
    <property type="project" value="UniProtKB-KW"/>
</dbReference>
<dbReference type="GO" id="GO:2000001">
    <property type="term" value="P:regulation of DNA damage checkpoint"/>
    <property type="evidence" value="ECO:0000303"/>
    <property type="project" value="ComplexPortal"/>
</dbReference>
<dbReference type="GO" id="GO:0006282">
    <property type="term" value="P:regulation of DNA repair"/>
    <property type="evidence" value="ECO:0000303"/>
    <property type="project" value="ComplexPortal"/>
</dbReference>
<dbReference type="GO" id="GO:0010212">
    <property type="term" value="P:response to ionizing radiation"/>
    <property type="evidence" value="ECO:0000315"/>
    <property type="project" value="UniProtKB"/>
</dbReference>
<dbReference type="GO" id="GO:0010165">
    <property type="term" value="P:response to X-ray"/>
    <property type="evidence" value="ECO:0000314"/>
    <property type="project" value="MGI"/>
</dbReference>
<dbReference type="CDD" id="cd08068">
    <property type="entry name" value="MPN_BRCC36"/>
    <property type="match status" value="1"/>
</dbReference>
<dbReference type="FunFam" id="3.40.140.10:FF:000015">
    <property type="entry name" value="Lys-63-specific deubiquitinase BRCC36 isoform 3"/>
    <property type="match status" value="1"/>
</dbReference>
<dbReference type="Gene3D" id="3.40.140.10">
    <property type="entry name" value="Cytidine Deaminase, domain 2"/>
    <property type="match status" value="1"/>
</dbReference>
<dbReference type="InterPro" id="IPR040749">
    <property type="entry name" value="BRCC36_C"/>
</dbReference>
<dbReference type="InterPro" id="IPR000555">
    <property type="entry name" value="JAMM/MPN+_dom"/>
</dbReference>
<dbReference type="InterPro" id="IPR050242">
    <property type="entry name" value="JAMM_MPN+_peptidase_M67A"/>
</dbReference>
<dbReference type="InterPro" id="IPR037518">
    <property type="entry name" value="MPN"/>
</dbReference>
<dbReference type="InterPro" id="IPR033860">
    <property type="entry name" value="MPN_BRCC36"/>
</dbReference>
<dbReference type="PANTHER" id="PTHR10410">
    <property type="entry name" value="EUKARYOTIC TRANSLATION INITIATION FACTOR 3 -RELATED"/>
    <property type="match status" value="1"/>
</dbReference>
<dbReference type="Pfam" id="PF18110">
    <property type="entry name" value="BRCC36_C"/>
    <property type="match status" value="1"/>
</dbReference>
<dbReference type="Pfam" id="PF01398">
    <property type="entry name" value="JAB"/>
    <property type="match status" value="1"/>
</dbReference>
<dbReference type="SMART" id="SM00232">
    <property type="entry name" value="JAB_MPN"/>
    <property type="match status" value="1"/>
</dbReference>
<dbReference type="SUPFAM" id="SSF102712">
    <property type="entry name" value="JAB1/MPN domain"/>
    <property type="match status" value="1"/>
</dbReference>
<dbReference type="PROSITE" id="PS50249">
    <property type="entry name" value="MPN"/>
    <property type="match status" value="1"/>
</dbReference>
<gene>
    <name type="primary">BRCC3</name>
    <name type="synonym">BRCC36</name>
    <name type="synonym">C6.1A</name>
    <name type="synonym">CXorf53</name>
</gene>
<comment type="function">
    <text evidence="2 4 5 6 8 9 10 11 12 13 14 15 16">Metalloprotease that specifically cleaves 'Lys-63'-linked polyubiquitin chains (PubMed:19214193, PubMed:20656690, PubMed:24075985, PubMed:26344097). Does not have activity toward 'Lys-48'-linked polyubiquitin chains (PubMed:19214193, PubMed:20656690, PubMed:24075985, PubMed:26344097). Component of the BRCA1-A complex, a complex that specifically recognizes 'Lys-63'-linked ubiquitinated histones H2A and H2AX at DNA lesions sites, leading to target the BRCA1-BARD1 heterodimer to sites of DNA damage at double-strand breaks (DSBs) (PubMed:14636569, PubMed:16707425, PubMed:17525341, PubMed:19202061, PubMed:19261746, PubMed:19261748, PubMed:19261749). In the BRCA1-A complex, it specifically removes 'Lys-63'-linked ubiquitin on histones H2A and H2AX, antagonizing the RNF8-dependent ubiquitination at double-strand breaks (DSBs) (PubMed:20656690). Catalytic subunit of the BRISC complex, a multiprotein complex that specifically cleaves 'Lys-63'-linked ubiquitin in various substrates (PubMed:20656690, PubMed:24075985, PubMed:26195665, PubMed:26344097). Mediates the specific 'Lys-63'-specific deubiquitination associated with the COP9 signalosome complex (CSN), via the interaction of the BRISC complex with the CSN complex (PubMed:19214193). The BRISC complex is required for normal mitotic spindle assembly and microtubule attachment to kinetochores via its role in deubiquitinating NUMA1 (PubMed:26195665). Plays a role in interferon signaling via its role in the deubiquitination of the interferon receptor IFNAR1; deubiquitination increases IFNAR1 activity by enhancing its stability and cell surface expression (PubMed:24075985, PubMed:26344097). Acts as a regulator of the NLRP3 inflammasome by mediating deubiquitination of NLRP3, leading to NLRP3 inflammasome assembly (By similarity). Down-regulates the response to bacterial lipopolysaccharide (LPS) via its role in IFNAR1 deubiquitination (PubMed:24075985). Deubiquitinates HDAC1 and PWWP2B leading to their stabilization (By similarity).</text>
</comment>
<comment type="cofactor">
    <cofactor evidence="1 21">
        <name>Zn(2+)</name>
        <dbReference type="ChEBI" id="CHEBI:29105"/>
    </cofactor>
    <text evidence="1">Binds 1 zinc ion per subunit.</text>
</comment>
<comment type="subunit">
    <text evidence="2 4 6 7 9 10 11 12 13 15 16">Component of the ARISC complex, at least composed of UIMC1/RAP80, ABRAXAS1, BRCC3/BRCC36, BABAM2 and BABAM1/NBA1 (PubMed:20656690, PubMed:24075985). Component of the BRCA1-A complex, at least composed of BRCA1, BARD1, UIMC1/RAP80, ABRAXAS1, BRCC3/BRCC36, babam2 and BABAM1/NBA1. In the BRCA1-A complex, interacts directly with ABRAXAS1 and babam2 (PubMed:18077395, PubMed:19261748). Component of the BRISC complex, at least composed of ABRAXAS2, BRCC3/BRCC36, BABAM2 and BABAM1/NBA1 (PubMed:24075985, PubMed:25283148, PubMed:26344097). Identified in a complex with SHMT2 and the other subunits of the BRISC complex (PubMed:24075985). In the BRISC complex, interacts directly with ABRAXAS2 (PubMed:20656690, PubMed:26344097). Identified in a complex with ABRAXAS2 and NUMA1 (PubMed:26195665). The BRISC complex interacts with the CSN complex. Component of the BRCA1/BRCA2 containing complex (BRCC), which also contains BRCA1, BRCA2, BARD1, BABAM2 and RAD51. BRCC is a ubiquitin E3 ligase complex that enhances cellular survival following DNA damage. Interacts with BRCA1. Binds polyubiquitin. Interacts with PWWP2B (By similarity). Interacts with HDAC1; this interaction is enhanced in the presence of PWWP2B (By similarity).</text>
</comment>
<comment type="interaction">
    <interactant intactId="EBI-750352">
        <id>P46736</id>
    </interactant>
    <interactant intactId="EBI-1263451">
        <id>Q6UWZ7</id>
        <label>ABRAXAS1</label>
    </interactant>
    <organismsDiffer>false</organismsDiffer>
    <experiments>4</experiments>
</comment>
<comment type="interaction">
    <interactant intactId="EBI-750352">
        <id>P46736</id>
    </interactant>
    <interactant intactId="EBI-1056583">
        <id>Q15018</id>
        <label>ABRAXAS2</label>
    </interactant>
    <organismsDiffer>false</organismsDiffer>
    <experiments>8</experiments>
</comment>
<comment type="interaction">
    <interactant intactId="EBI-750352">
        <id>P46736</id>
    </interactant>
    <interactant intactId="EBI-17183751">
        <id>X5D778</id>
        <label>ANKRD11</label>
    </interactant>
    <organismsDiffer>false</organismsDiffer>
    <experiments>3</experiments>
</comment>
<comment type="interaction">
    <interactant intactId="EBI-750352">
        <id>P46736</id>
    </interactant>
    <interactant intactId="EBI-352908">
        <id>P34897</id>
        <label>SHMT2</label>
    </interactant>
    <organismsDiffer>false</organismsDiffer>
    <experiments>4</experiments>
</comment>
<comment type="interaction">
    <interactant intactId="EBI-750352">
        <id>P46736</id>
    </interactant>
    <interactant intactId="EBI-9640371">
        <id>Q96RL1-1</id>
        <label>UIMC1</label>
    </interactant>
    <organismsDiffer>false</organismsDiffer>
    <experiments>4</experiments>
</comment>
<comment type="subcellular location">
    <subcellularLocation>
        <location evidence="7 8 11 12 13 14 16">Nucleus</location>
    </subcellularLocation>
    <subcellularLocation>
        <location evidence="13 14">Cytoplasm</location>
    </subcellularLocation>
    <subcellularLocation>
        <location evidence="22">Cytoplasm</location>
        <location evidence="22">Cytoskeleton</location>
        <location evidence="22">Spindle pole</location>
    </subcellularLocation>
    <text evidence="13 16">Localizes at sites of DNA damage at double-strand breaks (DSBs) (PubMed:20656690, PubMed:26344097). Interaction with ABRAXAS2 retains BRCC3 in the cytoplasm (PubMed:20656690).</text>
</comment>
<comment type="alternative products">
    <event type="alternative splicing"/>
    <isoform>
        <id>P46736-1</id>
        <name>2</name>
        <sequence type="displayed"/>
    </isoform>
    <isoform>
        <id>P46736-2</id>
        <name>1</name>
        <sequence type="described" ref="VSP_003261"/>
    </isoform>
    <isoform>
        <id>P46736-3</id>
        <name>3</name>
        <sequence type="described" ref="VSP_037258 VSP_003261"/>
    </isoform>
    <isoform>
        <id>P46736-4</id>
        <name>4</name>
        <sequence type="described" ref="VSP_037257"/>
    </isoform>
    <isoform>
        <id>P46736-5</id>
        <name>5</name>
        <sequence type="described" ref="VSP_037259"/>
    </isoform>
</comment>
<comment type="tissue specificity">
    <text evidence="5">Heart, brain, placenta, lung, liver, skeletal muscle, kidney and pancreas. Aberrantly expressed in the vast majority of breast tumors.</text>
</comment>
<comment type="disease">
    <text evidence="17">A chromosomal aberration involving BRCC3 is a cause of pro-lymphocytic T-cell leukemia (T-PLL). Translocation t(X;14)(q28;q11) with TCRA.</text>
</comment>
<comment type="similarity">
    <text evidence="21">Belongs to the peptidase M67A family. BRCC36 subfamily.</text>
</comment>
<comment type="sequence caution" evidence="21">
    <conflict type="erroneous initiation">
        <sequence resource="EMBL-CDS" id="AAB29005"/>
    </conflict>
    <text>Extended N-terminus.</text>
</comment>
<protein>
    <recommendedName>
        <fullName>Lys-63-specific deubiquitinase BRCC36</fullName>
        <ecNumber evidence="6 9 13 16">3.4.19.-</ecNumber>
    </recommendedName>
    <alternativeName>
        <fullName>BRCA1-A complex subunit BRCC36</fullName>
    </alternativeName>
    <alternativeName>
        <fullName>BRCA1/BRCA2-containing complex subunit 3</fullName>
    </alternativeName>
    <alternativeName>
        <fullName>BRCA1/BRCA2-containing complex subunit 36</fullName>
    </alternativeName>
    <alternativeName>
        <fullName>BRISC complex subunit BRCC36</fullName>
    </alternativeName>
</protein>
<reference key="1">
    <citation type="journal article" date="1992" name="Hum. Mol. Genet.">
        <title>Isolation and sequence of two genes associated with a CpG island 5' of the factor VIII gene.</title>
        <authorList>
            <person name="Kenwrick S."/>
            <person name="Levinson B."/>
            <person name="Taylor S."/>
            <person name="Shapiro A."/>
            <person name="Gitschier J."/>
        </authorList>
    </citation>
    <scope>NUCLEOTIDE SEQUENCE [MRNA] (ISOFORM 1)</scope>
    <source>
        <tissue>Placenta</tissue>
    </source>
</reference>
<reference key="2">
    <citation type="journal article" date="1993" name="Oncogene">
        <title>The chromosomal translocation t(X;14)(q28;q11) in T-cell pro-lymphocytic leukaemia breaks within one gene and activates another.</title>
        <authorList>
            <person name="Fisch P."/>
            <person name="Forster A."/>
            <person name="Sherrington P.D."/>
            <person name="Dyer M.J.S."/>
            <person name="Rabbitts T.H."/>
        </authorList>
    </citation>
    <scope>NUCLEOTIDE SEQUENCE [MRNA] (ISOFORM 2)</scope>
    <scope>CHROMOSOMAL TRANSLOCATION</scope>
</reference>
<reference key="3">
    <citation type="journal article" date="2003" name="Mol. Cell">
        <title>Regulation of BRCC, a holoenzyme complex containing BRCA1 and BRCA2, by a signalosome-like subunit and its role in DNA repair.</title>
        <authorList>
            <person name="Dong Y."/>
            <person name="Hakimi M.-A."/>
            <person name="Chen X."/>
            <person name="Kumaraswamy E."/>
            <person name="Cooch N.S."/>
            <person name="Godwin A.K."/>
            <person name="Shiekhattar R."/>
        </authorList>
    </citation>
    <scope>NUCLEOTIDE SEQUENCE [MRNA] (ISOFORM 2)</scope>
    <scope>FUNCTION</scope>
    <scope>IDENTIFICATION IN BRCC COMPLEX</scope>
    <scope>INTERACTION WITH BRCA1</scope>
</reference>
<reference key="4">
    <citation type="journal article" date="2004" name="Nat. Genet.">
        <title>Complete sequencing and characterization of 21,243 full-length human cDNAs.</title>
        <authorList>
            <person name="Ota T."/>
            <person name="Suzuki Y."/>
            <person name="Nishikawa T."/>
            <person name="Otsuki T."/>
            <person name="Sugiyama T."/>
            <person name="Irie R."/>
            <person name="Wakamatsu A."/>
            <person name="Hayashi K."/>
            <person name="Sato H."/>
            <person name="Nagai K."/>
            <person name="Kimura K."/>
            <person name="Makita H."/>
            <person name="Sekine M."/>
            <person name="Obayashi M."/>
            <person name="Nishi T."/>
            <person name="Shibahara T."/>
            <person name="Tanaka T."/>
            <person name="Ishii S."/>
            <person name="Yamamoto J."/>
            <person name="Saito K."/>
            <person name="Kawai Y."/>
            <person name="Isono Y."/>
            <person name="Nakamura Y."/>
            <person name="Nagahari K."/>
            <person name="Murakami K."/>
            <person name="Yasuda T."/>
            <person name="Iwayanagi T."/>
            <person name="Wagatsuma M."/>
            <person name="Shiratori A."/>
            <person name="Sudo H."/>
            <person name="Hosoiri T."/>
            <person name="Kaku Y."/>
            <person name="Kodaira H."/>
            <person name="Kondo H."/>
            <person name="Sugawara M."/>
            <person name="Takahashi M."/>
            <person name="Kanda K."/>
            <person name="Yokoi T."/>
            <person name="Furuya T."/>
            <person name="Kikkawa E."/>
            <person name="Omura Y."/>
            <person name="Abe K."/>
            <person name="Kamihara K."/>
            <person name="Katsuta N."/>
            <person name="Sato K."/>
            <person name="Tanikawa M."/>
            <person name="Yamazaki M."/>
            <person name="Ninomiya K."/>
            <person name="Ishibashi T."/>
            <person name="Yamashita H."/>
            <person name="Murakawa K."/>
            <person name="Fujimori K."/>
            <person name="Tanai H."/>
            <person name="Kimata M."/>
            <person name="Watanabe M."/>
            <person name="Hiraoka S."/>
            <person name="Chiba Y."/>
            <person name="Ishida S."/>
            <person name="Ono Y."/>
            <person name="Takiguchi S."/>
            <person name="Watanabe S."/>
            <person name="Yosida M."/>
            <person name="Hotuta T."/>
            <person name="Kusano J."/>
            <person name="Kanehori K."/>
            <person name="Takahashi-Fujii A."/>
            <person name="Hara H."/>
            <person name="Tanase T.-O."/>
            <person name="Nomura Y."/>
            <person name="Togiya S."/>
            <person name="Komai F."/>
            <person name="Hara R."/>
            <person name="Takeuchi K."/>
            <person name="Arita M."/>
            <person name="Imose N."/>
            <person name="Musashino K."/>
            <person name="Yuuki H."/>
            <person name="Oshima A."/>
            <person name="Sasaki N."/>
            <person name="Aotsuka S."/>
            <person name="Yoshikawa Y."/>
            <person name="Matsunawa H."/>
            <person name="Ichihara T."/>
            <person name="Shiohata N."/>
            <person name="Sano S."/>
            <person name="Moriya S."/>
            <person name="Momiyama H."/>
            <person name="Satoh N."/>
            <person name="Takami S."/>
            <person name="Terashima Y."/>
            <person name="Suzuki O."/>
            <person name="Nakagawa S."/>
            <person name="Senoh A."/>
            <person name="Mizoguchi H."/>
            <person name="Goto Y."/>
            <person name="Shimizu F."/>
            <person name="Wakebe H."/>
            <person name="Hishigaki H."/>
            <person name="Watanabe T."/>
            <person name="Sugiyama A."/>
            <person name="Takemoto M."/>
            <person name="Kawakami B."/>
            <person name="Yamazaki M."/>
            <person name="Watanabe K."/>
            <person name="Kumagai A."/>
            <person name="Itakura S."/>
            <person name="Fukuzumi Y."/>
            <person name="Fujimori Y."/>
            <person name="Komiyama M."/>
            <person name="Tashiro H."/>
            <person name="Tanigami A."/>
            <person name="Fujiwara T."/>
            <person name="Ono T."/>
            <person name="Yamada K."/>
            <person name="Fujii Y."/>
            <person name="Ozaki K."/>
            <person name="Hirao M."/>
            <person name="Ohmori Y."/>
            <person name="Kawabata A."/>
            <person name="Hikiji T."/>
            <person name="Kobatake N."/>
            <person name="Inagaki H."/>
            <person name="Ikema Y."/>
            <person name="Okamoto S."/>
            <person name="Okitani R."/>
            <person name="Kawakami T."/>
            <person name="Noguchi S."/>
            <person name="Itoh T."/>
            <person name="Shigeta K."/>
            <person name="Senba T."/>
            <person name="Matsumura K."/>
            <person name="Nakajima Y."/>
            <person name="Mizuno T."/>
            <person name="Morinaga M."/>
            <person name="Sasaki M."/>
            <person name="Togashi T."/>
            <person name="Oyama M."/>
            <person name="Hata H."/>
            <person name="Watanabe M."/>
            <person name="Komatsu T."/>
            <person name="Mizushima-Sugano J."/>
            <person name="Satoh T."/>
            <person name="Shirai Y."/>
            <person name="Takahashi Y."/>
            <person name="Nakagawa K."/>
            <person name="Okumura K."/>
            <person name="Nagase T."/>
            <person name="Nomura N."/>
            <person name="Kikuchi H."/>
            <person name="Masuho Y."/>
            <person name="Yamashita R."/>
            <person name="Nakai K."/>
            <person name="Yada T."/>
            <person name="Nakamura Y."/>
            <person name="Ohara O."/>
            <person name="Isogai T."/>
            <person name="Sugano S."/>
        </authorList>
    </citation>
    <scope>NUCLEOTIDE SEQUENCE [LARGE SCALE MRNA] (ISOFORMS 2; 3 AND 4)</scope>
    <source>
        <tissue>Brain</tissue>
        <tissue>Teratocarcinoma</tissue>
    </source>
</reference>
<reference key="5">
    <citation type="journal article" date="2005" name="Nature">
        <title>The DNA sequence of the human X chromosome.</title>
        <authorList>
            <person name="Ross M.T."/>
            <person name="Grafham D.V."/>
            <person name="Coffey A.J."/>
            <person name="Scherer S."/>
            <person name="McLay K."/>
            <person name="Muzny D."/>
            <person name="Platzer M."/>
            <person name="Howell G.R."/>
            <person name="Burrows C."/>
            <person name="Bird C.P."/>
            <person name="Frankish A."/>
            <person name="Lovell F.L."/>
            <person name="Howe K.L."/>
            <person name="Ashurst J.L."/>
            <person name="Fulton R.S."/>
            <person name="Sudbrak R."/>
            <person name="Wen G."/>
            <person name="Jones M.C."/>
            <person name="Hurles M.E."/>
            <person name="Andrews T.D."/>
            <person name="Scott C.E."/>
            <person name="Searle S."/>
            <person name="Ramser J."/>
            <person name="Whittaker A."/>
            <person name="Deadman R."/>
            <person name="Carter N.P."/>
            <person name="Hunt S.E."/>
            <person name="Chen R."/>
            <person name="Cree A."/>
            <person name="Gunaratne P."/>
            <person name="Havlak P."/>
            <person name="Hodgson A."/>
            <person name="Metzker M.L."/>
            <person name="Richards S."/>
            <person name="Scott G."/>
            <person name="Steffen D."/>
            <person name="Sodergren E."/>
            <person name="Wheeler D.A."/>
            <person name="Worley K.C."/>
            <person name="Ainscough R."/>
            <person name="Ambrose K.D."/>
            <person name="Ansari-Lari M.A."/>
            <person name="Aradhya S."/>
            <person name="Ashwell R.I."/>
            <person name="Babbage A.K."/>
            <person name="Bagguley C.L."/>
            <person name="Ballabio A."/>
            <person name="Banerjee R."/>
            <person name="Barker G.E."/>
            <person name="Barlow K.F."/>
            <person name="Barrett I.P."/>
            <person name="Bates K.N."/>
            <person name="Beare D.M."/>
            <person name="Beasley H."/>
            <person name="Beasley O."/>
            <person name="Beck A."/>
            <person name="Bethel G."/>
            <person name="Blechschmidt K."/>
            <person name="Brady N."/>
            <person name="Bray-Allen S."/>
            <person name="Bridgeman A.M."/>
            <person name="Brown A.J."/>
            <person name="Brown M.J."/>
            <person name="Bonnin D."/>
            <person name="Bruford E.A."/>
            <person name="Buhay C."/>
            <person name="Burch P."/>
            <person name="Burford D."/>
            <person name="Burgess J."/>
            <person name="Burrill W."/>
            <person name="Burton J."/>
            <person name="Bye J.M."/>
            <person name="Carder C."/>
            <person name="Carrel L."/>
            <person name="Chako J."/>
            <person name="Chapman J.C."/>
            <person name="Chavez D."/>
            <person name="Chen E."/>
            <person name="Chen G."/>
            <person name="Chen Y."/>
            <person name="Chen Z."/>
            <person name="Chinault C."/>
            <person name="Ciccodicola A."/>
            <person name="Clark S.Y."/>
            <person name="Clarke G."/>
            <person name="Clee C.M."/>
            <person name="Clegg S."/>
            <person name="Clerc-Blankenburg K."/>
            <person name="Clifford K."/>
            <person name="Cobley V."/>
            <person name="Cole C.G."/>
            <person name="Conquer J.S."/>
            <person name="Corby N."/>
            <person name="Connor R.E."/>
            <person name="David R."/>
            <person name="Davies J."/>
            <person name="Davis C."/>
            <person name="Davis J."/>
            <person name="Delgado O."/>
            <person name="Deshazo D."/>
            <person name="Dhami P."/>
            <person name="Ding Y."/>
            <person name="Dinh H."/>
            <person name="Dodsworth S."/>
            <person name="Draper H."/>
            <person name="Dugan-Rocha S."/>
            <person name="Dunham A."/>
            <person name="Dunn M."/>
            <person name="Durbin K.J."/>
            <person name="Dutta I."/>
            <person name="Eades T."/>
            <person name="Ellwood M."/>
            <person name="Emery-Cohen A."/>
            <person name="Errington H."/>
            <person name="Evans K.L."/>
            <person name="Faulkner L."/>
            <person name="Francis F."/>
            <person name="Frankland J."/>
            <person name="Fraser A.E."/>
            <person name="Galgoczy P."/>
            <person name="Gilbert J."/>
            <person name="Gill R."/>
            <person name="Gloeckner G."/>
            <person name="Gregory S.G."/>
            <person name="Gribble S."/>
            <person name="Griffiths C."/>
            <person name="Grocock R."/>
            <person name="Gu Y."/>
            <person name="Gwilliam R."/>
            <person name="Hamilton C."/>
            <person name="Hart E.A."/>
            <person name="Hawes A."/>
            <person name="Heath P.D."/>
            <person name="Heitmann K."/>
            <person name="Hennig S."/>
            <person name="Hernandez J."/>
            <person name="Hinzmann B."/>
            <person name="Ho S."/>
            <person name="Hoffs M."/>
            <person name="Howden P.J."/>
            <person name="Huckle E.J."/>
            <person name="Hume J."/>
            <person name="Hunt P.J."/>
            <person name="Hunt A.R."/>
            <person name="Isherwood J."/>
            <person name="Jacob L."/>
            <person name="Johnson D."/>
            <person name="Jones S."/>
            <person name="de Jong P.J."/>
            <person name="Joseph S.S."/>
            <person name="Keenan S."/>
            <person name="Kelly S."/>
            <person name="Kershaw J.K."/>
            <person name="Khan Z."/>
            <person name="Kioschis P."/>
            <person name="Klages S."/>
            <person name="Knights A.J."/>
            <person name="Kosiura A."/>
            <person name="Kovar-Smith C."/>
            <person name="Laird G.K."/>
            <person name="Langford C."/>
            <person name="Lawlor S."/>
            <person name="Leversha M."/>
            <person name="Lewis L."/>
            <person name="Liu W."/>
            <person name="Lloyd C."/>
            <person name="Lloyd D.M."/>
            <person name="Loulseged H."/>
            <person name="Loveland J.E."/>
            <person name="Lovell J.D."/>
            <person name="Lozado R."/>
            <person name="Lu J."/>
            <person name="Lyne R."/>
            <person name="Ma J."/>
            <person name="Maheshwari M."/>
            <person name="Matthews L.H."/>
            <person name="McDowall J."/>
            <person name="McLaren S."/>
            <person name="McMurray A."/>
            <person name="Meidl P."/>
            <person name="Meitinger T."/>
            <person name="Milne S."/>
            <person name="Miner G."/>
            <person name="Mistry S.L."/>
            <person name="Morgan M."/>
            <person name="Morris S."/>
            <person name="Mueller I."/>
            <person name="Mullikin J.C."/>
            <person name="Nguyen N."/>
            <person name="Nordsiek G."/>
            <person name="Nyakatura G."/>
            <person name="O'dell C.N."/>
            <person name="Okwuonu G."/>
            <person name="Palmer S."/>
            <person name="Pandian R."/>
            <person name="Parker D."/>
            <person name="Parrish J."/>
            <person name="Pasternak S."/>
            <person name="Patel D."/>
            <person name="Pearce A.V."/>
            <person name="Pearson D.M."/>
            <person name="Pelan S.E."/>
            <person name="Perez L."/>
            <person name="Porter K.M."/>
            <person name="Ramsey Y."/>
            <person name="Reichwald K."/>
            <person name="Rhodes S."/>
            <person name="Ridler K.A."/>
            <person name="Schlessinger D."/>
            <person name="Schueler M.G."/>
            <person name="Sehra H.K."/>
            <person name="Shaw-Smith C."/>
            <person name="Shen H."/>
            <person name="Sheridan E.M."/>
            <person name="Shownkeen R."/>
            <person name="Skuce C.D."/>
            <person name="Smith M.L."/>
            <person name="Sotheran E.C."/>
            <person name="Steingruber H.E."/>
            <person name="Steward C.A."/>
            <person name="Storey R."/>
            <person name="Swann R.M."/>
            <person name="Swarbreck D."/>
            <person name="Tabor P.E."/>
            <person name="Taudien S."/>
            <person name="Taylor T."/>
            <person name="Teague B."/>
            <person name="Thomas K."/>
            <person name="Thorpe A."/>
            <person name="Timms K."/>
            <person name="Tracey A."/>
            <person name="Trevanion S."/>
            <person name="Tromans A.C."/>
            <person name="d'Urso M."/>
            <person name="Verduzco D."/>
            <person name="Villasana D."/>
            <person name="Waldron L."/>
            <person name="Wall M."/>
            <person name="Wang Q."/>
            <person name="Warren J."/>
            <person name="Warry G.L."/>
            <person name="Wei X."/>
            <person name="West A."/>
            <person name="Whitehead S.L."/>
            <person name="Whiteley M.N."/>
            <person name="Wilkinson J.E."/>
            <person name="Willey D.L."/>
            <person name="Williams G."/>
            <person name="Williams L."/>
            <person name="Williamson A."/>
            <person name="Williamson H."/>
            <person name="Wilming L."/>
            <person name="Woodmansey R.L."/>
            <person name="Wray P.W."/>
            <person name="Yen J."/>
            <person name="Zhang J."/>
            <person name="Zhou J."/>
            <person name="Zoghbi H."/>
            <person name="Zorilla S."/>
            <person name="Buck D."/>
            <person name="Reinhardt R."/>
            <person name="Poustka A."/>
            <person name="Rosenthal A."/>
            <person name="Lehrach H."/>
            <person name="Meindl A."/>
            <person name="Minx P.J."/>
            <person name="Hillier L.W."/>
            <person name="Willard H.F."/>
            <person name="Wilson R.K."/>
            <person name="Waterston R.H."/>
            <person name="Rice C.M."/>
            <person name="Vaudin M."/>
            <person name="Coulson A."/>
            <person name="Nelson D.L."/>
            <person name="Weinstock G."/>
            <person name="Sulston J.E."/>
            <person name="Durbin R.M."/>
            <person name="Hubbard T."/>
            <person name="Gibbs R.A."/>
            <person name="Beck S."/>
            <person name="Rogers J."/>
            <person name="Bentley D.R."/>
        </authorList>
    </citation>
    <scope>NUCLEOTIDE SEQUENCE [LARGE SCALE GENOMIC DNA]</scope>
</reference>
<reference key="6">
    <citation type="journal article" date="2004" name="Genome Res.">
        <title>The status, quality, and expansion of the NIH full-length cDNA project: the Mammalian Gene Collection (MGC).</title>
        <authorList>
            <consortium name="The MGC Project Team"/>
        </authorList>
    </citation>
    <scope>NUCLEOTIDE SEQUENCE [LARGE SCALE MRNA] (ISOFORM 2)</scope>
    <source>
        <tissue>Lung</tissue>
    </source>
</reference>
<reference key="7">
    <citation type="submission" date="2009-03" db="UniProtKB">
        <authorList>
            <person name="Bienvenut W.V."/>
            <person name="Waridel P."/>
            <person name="Quadroni M."/>
        </authorList>
    </citation>
    <scope>PROTEIN SEQUENCE OF 2-31; 90-106 AND 227-237</scope>
    <scope>CLEAVAGE OF INITIATOR METHIONINE</scope>
    <scope>ACETYLATION AT ALA-2</scope>
    <scope>IDENTIFICATION BY MASS SPECTROMETRY</scope>
    <source>
        <tissue>Embryonic kidney</tissue>
    </source>
</reference>
<reference key="8">
    <citation type="journal article" date="2006" name="Cancer Res.">
        <title>BRCC36 is essential for ionizing radiation-induced BRCA1 phosphorylation and nuclear foci formation.</title>
        <authorList>
            <person name="Chen X."/>
            <person name="Arciero C.A."/>
            <person name="Wang C."/>
            <person name="Broccoli D."/>
            <person name="Godwin A.K."/>
        </authorList>
    </citation>
    <scope>FUNCTION</scope>
    <scope>TISSUE SPECIFICITY</scope>
</reference>
<reference key="9">
    <citation type="journal article" date="2007" name="Proc. Natl. Acad. Sci. U.S.A.">
        <title>Ubc13/Rnf8 ubiquitin ligases control foci formation of the Rap80/Abraxas/Brca1/Brcc36 complex in response to DNA damage.</title>
        <authorList>
            <person name="Wang B."/>
            <person name="Elledge S.J."/>
        </authorList>
    </citation>
    <scope>IDENTIFICATION IN THE BRCA1-A COMPLEX</scope>
    <scope>SUBCELLULAR LOCATION</scope>
    <scope>INTERACTION WITH ABRAXAS1</scope>
</reference>
<reference key="10">
    <citation type="journal article" date="2007" name="Science">
        <title>RAP80 targets BRCA1 to specific ubiquitin structures at DNA damage sites.</title>
        <authorList>
            <person name="Sobhian B."/>
            <person name="Shao G."/>
            <person name="Lilli D.R."/>
            <person name="Culhane A.C."/>
            <person name="Moreau L.A."/>
            <person name="Xia B."/>
            <person name="Livingston D.M."/>
            <person name="Greenberg R.A."/>
        </authorList>
    </citation>
    <scope>FUNCTION</scope>
    <scope>CATALYTIC ACTIVITY</scope>
    <scope>IDENTIFICATION IN THE BRCA1-A COMPLEX</scope>
    <scope>MUTAGENESIS OF 122-HIS--HIS-124</scope>
</reference>
<reference key="11">
    <citation type="journal article" date="2009" name="Genes Dev.">
        <title>NBA1, a new player in the Brca1 A complex, is required for DNA damage resistance and checkpoint control.</title>
        <authorList>
            <person name="Wang B."/>
            <person name="Hurov K."/>
            <person name="Hofmann K."/>
            <person name="Elledge S.J."/>
        </authorList>
    </citation>
    <scope>FUNCTION</scope>
    <scope>IDENTIFICATION IN THE BRCA1-A COMPLEX</scope>
    <scope>SUBCELLULAR LOCATION</scope>
    <scope>UBIQUITIN-BINDING</scope>
    <scope>INTERACTION WITH ABRAXAS1</scope>
</reference>
<reference key="12">
    <citation type="journal article" date="2009" name="Genes Dev.">
        <title>MERIT40 controls BRCA1-Rap80 complex integrity and recruitment to DNA double-strand breaks.</title>
        <authorList>
            <person name="Shao G."/>
            <person name="Patterson-Fortin J."/>
            <person name="Messick T.E."/>
            <person name="Feng D."/>
            <person name="Shanbhag N."/>
            <person name="Wang Y."/>
            <person name="Greenberg R.A."/>
        </authorList>
    </citation>
    <scope>FUNCTION</scope>
    <scope>IDENTIFICATION BY MASS SPECTROMETRY</scope>
    <scope>IDENTIFICATION IN THE BRCA1-A COMPLEX</scope>
    <scope>MUTAGENESIS OF 122-HIS--HIS-124</scope>
</reference>
<reference key="13">
    <citation type="journal article" date="2009" name="Genes Dev.">
        <title>MERIT40 facilitates BRCA1 localization and DNA damage repair.</title>
        <authorList>
            <person name="Feng L."/>
            <person name="Huang J."/>
            <person name="Chen J."/>
        </authorList>
    </citation>
    <scope>FUNCTION</scope>
    <scope>IDENTIFICATION BY MASS SPECTROMETRY</scope>
    <scope>IDENTIFICATION IN THE BRCA1-A COMPLEX</scope>
    <scope>SUBCELLULAR LOCATION</scope>
    <scope>INTERACTION WITH BABAM2 ANDABRAXAS1</scope>
</reference>
<reference key="14">
    <citation type="journal article" date="2009" name="EMBO J.">
        <title>K63-specific deubiquitination by two JAMM/MPN+ complexes: BRISC-associated Brcc36 and proteasomal Poh1.</title>
        <authorList>
            <person name="Cooper E.M."/>
            <person name="Cutcliffe C."/>
            <person name="Kristiansen T.Z."/>
            <person name="Pandey A."/>
            <person name="Pickart C.M."/>
            <person name="Cohen R.E."/>
        </authorList>
    </citation>
    <scope>FUNCTION</scope>
    <scope>CATALYTIC ACTIVITY</scope>
    <scope>IDENTIFICATION IN THE BRISC COMPLEX</scope>
    <scope>INTERACTION WITH THE CSN COMPLEX</scope>
    <scope>MUTAGENESIS OF HIS-122</scope>
</reference>
<reference key="15">
    <citation type="journal article" date="2009" name="Proc. Natl. Acad. Sci. U.S.A.">
        <title>The Rap80-BRCC36 de-ubiquitinating enzyme complex antagonizes RNF8-Ubc13-dependent ubiquitination events at DNA double strand breaks.</title>
        <authorList>
            <person name="Shao G."/>
            <person name="Lilli D.R."/>
            <person name="Patterson-Fortin J."/>
            <person name="Coleman K.A."/>
            <person name="Morrissey D.E."/>
            <person name="Greenberg R.A."/>
        </authorList>
    </citation>
    <scope>FUNCTION</scope>
    <scope>SUBCELLULAR LOCATION</scope>
    <scope>MUTAGENESIS OF 122-HIS--HIS-124</scope>
</reference>
<reference key="16">
    <citation type="journal article" date="2010" name="J. Biol. Chem.">
        <title>The Lys63-specific deubiquitinating enzyme BRCC36 is regulated by two scaffold proteins localizing in different subcellular compartments.</title>
        <authorList>
            <person name="Feng L."/>
            <person name="Wang J."/>
            <person name="Chen J."/>
        </authorList>
    </citation>
    <scope>FUNCTION</scope>
    <scope>CATALYTIC ACTIVITY</scope>
    <scope>INTERACTION WITH ABRAXAS2</scope>
    <scope>IDENTIFICATION IN THE ARISC COMPLEX</scope>
    <scope>SUBCELLULAR LOCATION</scope>
</reference>
<reference key="17">
    <citation type="journal article" date="2011" name="BMC Syst. Biol.">
        <title>Initial characterization of the human central proteome.</title>
        <authorList>
            <person name="Burkard T.R."/>
            <person name="Planyavsky M."/>
            <person name="Kaupe I."/>
            <person name="Breitwieser F.P."/>
            <person name="Buerckstuemmer T."/>
            <person name="Bennett K.L."/>
            <person name="Superti-Furga G."/>
            <person name="Colinge J."/>
        </authorList>
    </citation>
    <scope>IDENTIFICATION BY MASS SPECTROMETRY [LARGE SCALE ANALYSIS]</scope>
</reference>
<reference key="18">
    <citation type="journal article" date="2013" name="Cell Rep.">
        <title>A BRISC-SHMT complex deubiquitinates IFNAR1 and regulates interferon responses.</title>
        <authorList>
            <person name="Zheng H."/>
            <person name="Gupta V."/>
            <person name="Patterson-Fortin J."/>
            <person name="Bhattacharya S."/>
            <person name="Katlinski K."/>
            <person name="Wu J."/>
            <person name="Varghese B."/>
            <person name="Carbone C.J."/>
            <person name="Aressy B."/>
            <person name="Fuchs S.Y."/>
            <person name="Greenberg R.A."/>
        </authorList>
    </citation>
    <scope>FUNCTION</scope>
    <scope>CATALYTIC ACTIVITY</scope>
    <scope>IDENTIFICATION IN THE BRISC COMPLEX</scope>
    <scope>IDENTIFICATION IN THE ARISC COMPLEX</scope>
    <scope>SUBCELLULAR LOCATION</scope>
    <scope>IDENTIFICATION BY MASS SPECTROMETRY</scope>
</reference>
<reference key="19">
    <citation type="journal article" date="2013" name="J. Proteome Res.">
        <title>Toward a comprehensive characterization of a human cancer cell phosphoproteome.</title>
        <authorList>
            <person name="Zhou H."/>
            <person name="Di Palma S."/>
            <person name="Preisinger C."/>
            <person name="Peng M."/>
            <person name="Polat A.N."/>
            <person name="Heck A.J."/>
            <person name="Mohammed S."/>
        </authorList>
    </citation>
    <scope>PHOSPHORYLATION [LARGE SCALE ANALYSIS] AT SER-258</scope>
    <scope>IDENTIFICATION BY MASS SPECTROMETRY [LARGE SCALE ANALYSIS]</scope>
    <source>
        <tissue>Erythroleukemia</tissue>
    </source>
</reference>
<reference key="20">
    <citation type="journal article" date="2014" name="Nat. Commun.">
        <title>ABRO1 suppresses tumourigenesis and regulates the DNA damage response by stabilizing p53.</title>
        <authorList>
            <person name="Zhang J."/>
            <person name="Cao M."/>
            <person name="Dong J."/>
            <person name="Li C."/>
            <person name="Xu W."/>
            <person name="Zhan Y."/>
            <person name="Wang X."/>
            <person name="Yu M."/>
            <person name="Ge C."/>
            <person name="Ge Z."/>
            <person name="Yang X."/>
        </authorList>
    </citation>
    <scope>IDENTIFICATION IN THE BRISC COMPLEX</scope>
</reference>
<reference key="21">
    <citation type="journal article" date="2015" name="J. Cell Biol.">
        <title>The deubiquitinating enzyme complex BRISC is required for proper mitotic spindle assembly in mammalian cells.</title>
        <authorList>
            <person name="Yan K."/>
            <person name="Li L."/>
            <person name="Wang X."/>
            <person name="Hong R."/>
            <person name="Zhang Y."/>
            <person name="Yang H."/>
            <person name="Lin M."/>
            <person name="Zhang S."/>
            <person name="He Q."/>
            <person name="Zheng D."/>
            <person name="Tang J."/>
            <person name="Yin Y."/>
            <person name="Shao G."/>
        </authorList>
    </citation>
    <scope>FUNCTION</scope>
    <scope>SUBUNIT</scope>
    <scope>IDENTIFICATION IN A COMPLEX WITH NUMA1 AND ABRAXAS2</scope>
    <scope>MUTAGENESIS OF 122-HIS--HIS-124</scope>
</reference>
<reference key="22">
    <citation type="journal article" date="2015" name="Mol. Cell">
        <title>Higher-order assembly of BRCC36-KIAA0157 is required for DUB activity and biological function.</title>
        <authorList>
            <person name="Zeqiraj E."/>
            <person name="Tian L."/>
            <person name="Piggott C.A."/>
            <person name="Pillon M.C."/>
            <person name="Duffy N.M."/>
            <person name="Ceccarelli D.F."/>
            <person name="Keszei A.F."/>
            <person name="Lorenzen K."/>
            <person name="Kurinov I."/>
            <person name="Orlicky S."/>
            <person name="Gish G.D."/>
            <person name="Heck A.J."/>
            <person name="Guarne A."/>
            <person name="Greenberg R.A."/>
            <person name="Sicheri F."/>
        </authorList>
    </citation>
    <scope>FUNCTION</scope>
    <scope>INTERACTION WITH ABRAXAS2; UIMC1; SHMT2; BABAM2 AND BABAM1</scope>
    <scope>SUBUNIT</scope>
    <scope>MUTAGENESIS OF LEU-23; LEU-27 AND ALA-278</scope>
    <scope>SUBCELLULAR LOCATION</scope>
    <scope>CATALYTIC ACTIVITY</scope>
</reference>
<evidence type="ECO:0000250" key="1">
    <source>
        <dbReference type="UniProtKB" id="E2AXC7"/>
    </source>
</evidence>
<evidence type="ECO:0000250" key="2">
    <source>
        <dbReference type="UniProtKB" id="P46737"/>
    </source>
</evidence>
<evidence type="ECO:0000255" key="3">
    <source>
        <dbReference type="PROSITE-ProRule" id="PRU01182"/>
    </source>
</evidence>
<evidence type="ECO:0000269" key="4">
    <source>
    </source>
</evidence>
<evidence type="ECO:0000269" key="5">
    <source>
    </source>
</evidence>
<evidence type="ECO:0000269" key="6">
    <source>
    </source>
</evidence>
<evidence type="ECO:0000269" key="7">
    <source>
    </source>
</evidence>
<evidence type="ECO:0000269" key="8">
    <source>
    </source>
</evidence>
<evidence type="ECO:0000269" key="9">
    <source>
    </source>
</evidence>
<evidence type="ECO:0000269" key="10">
    <source>
    </source>
</evidence>
<evidence type="ECO:0000269" key="11">
    <source>
    </source>
</evidence>
<evidence type="ECO:0000269" key="12">
    <source>
    </source>
</evidence>
<evidence type="ECO:0000269" key="13">
    <source>
    </source>
</evidence>
<evidence type="ECO:0000269" key="14">
    <source>
    </source>
</evidence>
<evidence type="ECO:0000269" key="15">
    <source>
    </source>
</evidence>
<evidence type="ECO:0000269" key="16">
    <source>
    </source>
</evidence>
<evidence type="ECO:0000269" key="17">
    <source>
    </source>
</evidence>
<evidence type="ECO:0000269" key="18">
    <source ref="7"/>
</evidence>
<evidence type="ECO:0000303" key="19">
    <source>
    </source>
</evidence>
<evidence type="ECO:0000303" key="20">
    <source>
    </source>
</evidence>
<evidence type="ECO:0000305" key="21"/>
<evidence type="ECO:0000305" key="22">
    <source>
    </source>
</evidence>
<evidence type="ECO:0007744" key="23">
    <source>
    </source>
</evidence>
<organism>
    <name type="scientific">Homo sapiens</name>
    <name type="common">Human</name>
    <dbReference type="NCBI Taxonomy" id="9606"/>
    <lineage>
        <taxon>Eukaryota</taxon>
        <taxon>Metazoa</taxon>
        <taxon>Chordata</taxon>
        <taxon>Craniata</taxon>
        <taxon>Vertebrata</taxon>
        <taxon>Euteleostomi</taxon>
        <taxon>Mammalia</taxon>
        <taxon>Eutheria</taxon>
        <taxon>Euarchontoglires</taxon>
        <taxon>Primates</taxon>
        <taxon>Haplorrhini</taxon>
        <taxon>Catarrhini</taxon>
        <taxon>Hominidae</taxon>
        <taxon>Homo</taxon>
    </lineage>
</organism>